<proteinExistence type="evidence at protein level"/>
<dbReference type="EMBL" id="S81914">
    <property type="protein sequence ID" value="AAB36278.1"/>
    <property type="molecule type" value="mRNA"/>
</dbReference>
<dbReference type="EMBL" id="X96438">
    <property type="protein sequence ID" value="CAA65304.1"/>
    <property type="molecule type" value="Genomic_DNA"/>
</dbReference>
<dbReference type="EMBL" id="Y14551">
    <property type="protein sequence ID" value="CAA74886.1"/>
    <property type="molecule type" value="mRNA"/>
</dbReference>
<dbReference type="EMBL" id="BT006703">
    <property type="protein sequence ID" value="AAP35349.1"/>
    <property type="molecule type" value="mRNA"/>
</dbReference>
<dbReference type="EMBL" id="BA000025">
    <property type="protein sequence ID" value="BAB63319.1"/>
    <property type="molecule type" value="Genomic_DNA"/>
</dbReference>
<dbReference type="EMBL" id="AL662797">
    <property type="status" value="NOT_ANNOTATED_CDS"/>
    <property type="molecule type" value="Genomic_DNA"/>
</dbReference>
<dbReference type="EMBL" id="BC000844">
    <property type="protein sequence ID" value="AAH00844.1"/>
    <property type="molecule type" value="mRNA"/>
</dbReference>
<dbReference type="EMBL" id="BC005080">
    <property type="protein sequence ID" value="AAH05080.1"/>
    <property type="molecule type" value="mRNA"/>
</dbReference>
<dbReference type="CCDS" id="CCDS4689.1"/>
<dbReference type="PIR" id="JC5537">
    <property type="entry name" value="JC5537"/>
</dbReference>
<dbReference type="RefSeq" id="NP_003888.2">
    <property type="nucleotide sequence ID" value="NM_003897.4"/>
</dbReference>
<dbReference type="BioGRID" id="114390">
    <property type="interactions" value="23"/>
</dbReference>
<dbReference type="FunCoup" id="P46695">
    <property type="interactions" value="883"/>
</dbReference>
<dbReference type="IntAct" id="P46695">
    <property type="interactions" value="17"/>
</dbReference>
<dbReference type="MINT" id="P46695"/>
<dbReference type="STRING" id="9606.ENSP00000259874"/>
<dbReference type="GlyCosmos" id="P46695">
    <property type="glycosylation" value="1 site, No reported glycans"/>
</dbReference>
<dbReference type="GlyGen" id="P46695">
    <property type="glycosylation" value="4 sites, 1 O-linked glycan (2 sites)"/>
</dbReference>
<dbReference type="iPTMnet" id="P46695"/>
<dbReference type="PhosphoSitePlus" id="P46695"/>
<dbReference type="BioMuta" id="IER3"/>
<dbReference type="DMDM" id="317373569"/>
<dbReference type="jPOST" id="P46695"/>
<dbReference type="MassIVE" id="P46695"/>
<dbReference type="PaxDb" id="9606-ENSP00000259874"/>
<dbReference type="PeptideAtlas" id="P46695"/>
<dbReference type="ProteomicsDB" id="55747"/>
<dbReference type="Antibodypedia" id="26624">
    <property type="antibodies" value="170 antibodies from 27 providers"/>
</dbReference>
<dbReference type="DNASU" id="8870"/>
<dbReference type="Ensembl" id="ENST00000259874.6">
    <property type="protein sequence ID" value="ENSP00000259874.5"/>
    <property type="gene ID" value="ENSG00000137331.12"/>
</dbReference>
<dbReference type="Ensembl" id="ENST00000383560.4">
    <property type="protein sequence ID" value="ENSP00000373054.4"/>
    <property type="gene ID" value="ENSG00000206478.5"/>
</dbReference>
<dbReference type="Ensembl" id="ENST00000416884.2">
    <property type="protein sequence ID" value="ENSP00000406245.2"/>
    <property type="gene ID" value="ENSG00000227231.3"/>
</dbReference>
<dbReference type="Ensembl" id="ENST00000435856.2">
    <property type="protein sequence ID" value="ENSP00000412283.2"/>
    <property type="gene ID" value="ENSG00000235030.3"/>
</dbReference>
<dbReference type="Ensembl" id="ENST00000439190.2">
    <property type="protein sequence ID" value="ENSP00000397956.2"/>
    <property type="gene ID" value="ENSG00000237155.3"/>
</dbReference>
<dbReference type="Ensembl" id="ENST00000450236.2">
    <property type="protein sequence ID" value="ENSP00000398139.2"/>
    <property type="gene ID" value="ENSG00000230128.3"/>
</dbReference>
<dbReference type="GeneID" id="8870"/>
<dbReference type="KEGG" id="hsa:8870"/>
<dbReference type="MANE-Select" id="ENST00000259874.6">
    <property type="protein sequence ID" value="ENSP00000259874.5"/>
    <property type="RefSeq nucleotide sequence ID" value="NM_003897.4"/>
    <property type="RefSeq protein sequence ID" value="NP_003888.2"/>
</dbReference>
<dbReference type="UCSC" id="uc003nrn.4">
    <property type="organism name" value="human"/>
</dbReference>
<dbReference type="AGR" id="HGNC:5392"/>
<dbReference type="CTD" id="8870"/>
<dbReference type="DisGeNET" id="8870"/>
<dbReference type="GeneCards" id="IER3"/>
<dbReference type="HGNC" id="HGNC:5392">
    <property type="gene designation" value="IER3"/>
</dbReference>
<dbReference type="HPA" id="ENSG00000137331">
    <property type="expression patterns" value="Low tissue specificity"/>
</dbReference>
<dbReference type="MIM" id="602996">
    <property type="type" value="gene"/>
</dbReference>
<dbReference type="neXtProt" id="NX_P46695"/>
<dbReference type="OpenTargets" id="ENSG00000137331"/>
<dbReference type="PharmGKB" id="PA29639"/>
<dbReference type="VEuPathDB" id="HostDB:ENSG00000137331"/>
<dbReference type="eggNOG" id="ENOG502S3QE">
    <property type="taxonomic scope" value="Eukaryota"/>
</dbReference>
<dbReference type="GeneTree" id="ENSGT00390000003213"/>
<dbReference type="HOGENOM" id="CLU_138897_0_0_1"/>
<dbReference type="InParanoid" id="P46695"/>
<dbReference type="OMA" id="GPQYFTF"/>
<dbReference type="OrthoDB" id="9949267at2759"/>
<dbReference type="PAN-GO" id="P46695">
    <property type="GO annotations" value="2 GO annotations based on evolutionary models"/>
</dbReference>
<dbReference type="PhylomeDB" id="P46695"/>
<dbReference type="TreeFam" id="TF338252"/>
<dbReference type="PathwayCommons" id="P46695"/>
<dbReference type="Reactome" id="R-HSA-6811558">
    <property type="pathway name" value="PI5P, PP2A and IER3 Regulate PI3K/AKT Signaling"/>
</dbReference>
<dbReference type="SignaLink" id="P46695"/>
<dbReference type="SIGNOR" id="P46695"/>
<dbReference type="BioGRID-ORCS" id="8870">
    <property type="hits" value="16 hits in 1151 CRISPR screens"/>
</dbReference>
<dbReference type="ChiTaRS" id="IER3">
    <property type="organism name" value="human"/>
</dbReference>
<dbReference type="GeneWiki" id="IER3"/>
<dbReference type="GenomeRNAi" id="8870"/>
<dbReference type="Pharos" id="P46695">
    <property type="development level" value="Tbio"/>
</dbReference>
<dbReference type="PRO" id="PR:P46695"/>
<dbReference type="Proteomes" id="UP000005640">
    <property type="component" value="Chromosome 6"/>
</dbReference>
<dbReference type="RNAct" id="P46695">
    <property type="molecule type" value="protein"/>
</dbReference>
<dbReference type="Bgee" id="ENSG00000137331">
    <property type="expression patterns" value="Expressed in olfactory segment of nasal mucosa and 96 other cell types or tissues"/>
</dbReference>
<dbReference type="ExpressionAtlas" id="P46695">
    <property type="expression patterns" value="baseline and differential"/>
</dbReference>
<dbReference type="GO" id="GO:0005829">
    <property type="term" value="C:cytosol"/>
    <property type="evidence" value="ECO:0000304"/>
    <property type="project" value="Reactome"/>
</dbReference>
<dbReference type="GO" id="GO:0016020">
    <property type="term" value="C:membrane"/>
    <property type="evidence" value="ECO:0007669"/>
    <property type="project" value="UniProtKB-SubCell"/>
</dbReference>
<dbReference type="GO" id="GO:0005739">
    <property type="term" value="C:mitochondrion"/>
    <property type="evidence" value="ECO:0007669"/>
    <property type="project" value="GOC"/>
</dbReference>
<dbReference type="GO" id="GO:0005634">
    <property type="term" value="C:nucleus"/>
    <property type="evidence" value="ECO:0000314"/>
    <property type="project" value="MGI"/>
</dbReference>
<dbReference type="GO" id="GO:0009653">
    <property type="term" value="P:anatomical structure morphogenesis"/>
    <property type="evidence" value="ECO:0000304"/>
    <property type="project" value="ProtInc"/>
</dbReference>
<dbReference type="GO" id="GO:0006915">
    <property type="term" value="P:apoptotic process"/>
    <property type="evidence" value="ECO:0000304"/>
    <property type="project" value="ProtInc"/>
</dbReference>
<dbReference type="GO" id="GO:0006974">
    <property type="term" value="P:DNA damage response"/>
    <property type="evidence" value="ECO:0000315"/>
    <property type="project" value="MGI"/>
</dbReference>
<dbReference type="GO" id="GO:0006096">
    <property type="term" value="P:glycolytic process"/>
    <property type="evidence" value="ECO:0007669"/>
    <property type="project" value="Ensembl"/>
</dbReference>
<dbReference type="GO" id="GO:0008630">
    <property type="term" value="P:intrinsic apoptotic signaling pathway in response to DNA damage"/>
    <property type="evidence" value="ECO:0007669"/>
    <property type="project" value="Ensembl"/>
</dbReference>
<dbReference type="GO" id="GO:0007095">
    <property type="term" value="P:mitotic G2 DNA damage checkpoint signaling"/>
    <property type="evidence" value="ECO:0007669"/>
    <property type="project" value="Ensembl"/>
</dbReference>
<dbReference type="GO" id="GO:0043066">
    <property type="term" value="P:negative regulation of apoptotic process"/>
    <property type="evidence" value="ECO:0000304"/>
    <property type="project" value="ProtInc"/>
</dbReference>
<dbReference type="GO" id="GO:0045820">
    <property type="term" value="P:negative regulation of glycolytic process"/>
    <property type="evidence" value="ECO:0007669"/>
    <property type="project" value="Ensembl"/>
</dbReference>
<dbReference type="GO" id="GO:0050728">
    <property type="term" value="P:negative regulation of inflammatory response"/>
    <property type="evidence" value="ECO:0007669"/>
    <property type="project" value="Ensembl"/>
</dbReference>
<dbReference type="GO" id="GO:1901029">
    <property type="term" value="P:negative regulation of mitochondrial outer membrane permeabilization involved in apoptotic signaling pathway"/>
    <property type="evidence" value="ECO:0007669"/>
    <property type="project" value="Ensembl"/>
</dbReference>
<dbReference type="GO" id="GO:0003085">
    <property type="term" value="P:negative regulation of systemic arterial blood pressure"/>
    <property type="evidence" value="ECO:0007669"/>
    <property type="project" value="Ensembl"/>
</dbReference>
<dbReference type="GO" id="GO:0045732">
    <property type="term" value="P:positive regulation of protein catabolic process"/>
    <property type="evidence" value="ECO:0007669"/>
    <property type="project" value="Ensembl"/>
</dbReference>
<dbReference type="GO" id="GO:0006282">
    <property type="term" value="P:regulation of DNA repair"/>
    <property type="evidence" value="ECO:0007669"/>
    <property type="project" value="Ensembl"/>
</dbReference>
<dbReference type="GO" id="GO:0046822">
    <property type="term" value="P:regulation of nucleocytoplasmic transport"/>
    <property type="evidence" value="ECO:0007669"/>
    <property type="project" value="Ensembl"/>
</dbReference>
<dbReference type="GO" id="GO:2000377">
    <property type="term" value="P:regulation of reactive oxygen species metabolic process"/>
    <property type="evidence" value="ECO:0007669"/>
    <property type="project" value="Ensembl"/>
</dbReference>
<dbReference type="GO" id="GO:0001562">
    <property type="term" value="P:response to protozoan"/>
    <property type="evidence" value="ECO:0007669"/>
    <property type="project" value="Ensembl"/>
</dbReference>
<dbReference type="InterPro" id="IPR024829">
    <property type="entry name" value="IEX-1"/>
</dbReference>
<dbReference type="PANTHER" id="PTHR16915">
    <property type="entry name" value="IMMEDIATE EARLY RESPONSE 3"/>
    <property type="match status" value="1"/>
</dbReference>
<dbReference type="PANTHER" id="PTHR16915:SF0">
    <property type="entry name" value="RADIATION-INDUCIBLE IMMEDIATE-EARLY GENE IEX-1"/>
    <property type="match status" value="1"/>
</dbReference>
<dbReference type="PRINTS" id="PR02100">
    <property type="entry name" value="GENEIEX1"/>
</dbReference>
<evidence type="ECO:0000255" key="1"/>
<evidence type="ECO:0000256" key="2">
    <source>
        <dbReference type="SAM" id="MobiDB-lite"/>
    </source>
</evidence>
<evidence type="ECO:0000269" key="3">
    <source>
    </source>
</evidence>
<evidence type="ECO:0000269" key="4">
    <source>
    </source>
</evidence>
<evidence type="ECO:0000269" key="5">
    <source>
    </source>
</evidence>
<evidence type="ECO:0000269" key="6">
    <source>
    </source>
</evidence>
<evidence type="ECO:0000269" key="7">
    <source>
    </source>
</evidence>
<evidence type="ECO:0000269" key="8">
    <source>
    </source>
</evidence>
<evidence type="ECO:0000269" key="9">
    <source>
    </source>
</evidence>
<evidence type="ECO:0000269" key="10">
    <source ref="4"/>
</evidence>
<evidence type="ECO:0000269" key="11">
    <source ref="5"/>
</evidence>
<evidence type="ECO:0000305" key="12"/>
<evidence type="ECO:0007744" key="13">
    <source>
    </source>
</evidence>
<gene>
    <name type="primary">IER3</name>
    <name type="synonym">DIF2</name>
    <name type="synonym">IEX1</name>
    <name type="synonym">PRG1</name>
</gene>
<sequence length="156" mass="16903">MCHSRSCHPTMTILQAPTPAPSTIPGPRRGSGPEIFTFDPLPEPAAAPAGRPSASRGHRKRSRRVLYPRVVRRQLPVEEPNPAKRLLFLLLTIVFCQILMAEEGVPAPLPPEDAPNAASLAPTPVSAVLEPFNLTSEPSDYALDLSTFLQQHPAAF</sequence>
<comment type="function">
    <text evidence="3 5 6">May play a role in the ERK signaling pathway by inhibiting the dephosphorylation of ERK by phosphatase PP2A-PPP2R5C holoenzyme. Also acts as an ERK downstream effector mediating survival. As a member of the NUPR1/RELB/IER3 survival pathway, may provide pancreatic ductal adenocarcinoma with remarkable resistance to cell stress, such as starvation or gemcitabine treatment.</text>
</comment>
<comment type="subunit">
    <text evidence="3 5">Interacts with the PPP2R5C-PP2A holoenzyme and ERK kinases; regulates ERK dephosphorylation.</text>
</comment>
<comment type="interaction">
    <interactant intactId="EBI-1748945">
        <id>P46695</id>
    </interactant>
    <interactant intactId="EBI-1748958">
        <id>P49069</id>
        <label>CAMLG</label>
    </interactant>
    <organismsDiffer>false</organismsDiffer>
    <experiments>2</experiments>
</comment>
<comment type="interaction">
    <interactant intactId="EBI-1748945">
        <id>P46695</id>
    </interactant>
    <interactant intactId="EBI-7797864">
        <id>P11912</id>
        <label>CD79A</label>
    </interactant>
    <organismsDiffer>false</organismsDiffer>
    <experiments>3</experiments>
</comment>
<comment type="interaction">
    <interactant intactId="EBI-1748945">
        <id>P46695</id>
    </interactant>
    <interactant intactId="EBI-1045797">
        <id>Q8N5K1</id>
        <label>CISD2</label>
    </interactant>
    <organismsDiffer>false</organismsDiffer>
    <experiments>3</experiments>
</comment>
<comment type="interaction">
    <interactant intactId="EBI-1748945">
        <id>P46695</id>
    </interactant>
    <interactant intactId="EBI-3918971">
        <id>Q9Y680</id>
        <label>FKBP7</label>
    </interactant>
    <organismsDiffer>false</organismsDiffer>
    <experiments>3</experiments>
</comment>
<comment type="interaction">
    <interactant intactId="EBI-1748945">
        <id>P46695</id>
    </interactant>
    <interactant intactId="EBI-712311">
        <id>P67775</id>
        <label>PPP2CA</label>
    </interactant>
    <organismsDiffer>false</organismsDiffer>
    <experiments>2</experiments>
</comment>
<comment type="interaction">
    <interactant intactId="EBI-1748945">
        <id>P46695</id>
    </interactant>
    <interactant intactId="EBI-1369497">
        <id>Q15173</id>
        <label>PPP2R5B</label>
    </interactant>
    <organismsDiffer>false</organismsDiffer>
    <experiments>4</experiments>
</comment>
<comment type="interaction">
    <interactant intactId="EBI-1748945">
        <id>P46695</id>
    </interactant>
    <interactant intactId="EBI-1266156">
        <id>Q13362</id>
        <label>PPP2R5C</label>
    </interactant>
    <organismsDiffer>false</organismsDiffer>
    <experiments>2</experiments>
</comment>
<comment type="interaction">
    <interactant intactId="EBI-1748945">
        <id>P46695</id>
    </interactant>
    <interactant intactId="EBI-73886">
        <id>Q04206</id>
        <label>RELA</label>
    </interactant>
    <organismsDiffer>false</organismsDiffer>
    <experiments>6</experiments>
</comment>
<comment type="interaction">
    <interactant intactId="EBI-1748945">
        <id>P46695</id>
    </interactant>
    <interactant intactId="EBI-347996">
        <id>O43765</id>
        <label>SGTA</label>
    </interactant>
    <organismsDiffer>false</organismsDiffer>
    <experiments>6</experiments>
</comment>
<comment type="interaction">
    <interactant intactId="EBI-1748945">
        <id>P46695</id>
    </interactant>
    <interactant intactId="EBI-12808018">
        <id>Q9UKG4</id>
        <label>SLC13A4</label>
    </interactant>
    <organismsDiffer>false</organismsDiffer>
    <experiments>3</experiments>
</comment>
<comment type="interaction">
    <interactant intactId="EBI-1748945">
        <id>P46695</id>
    </interactant>
    <interactant intactId="EBI-1045825">
        <id>P55061</id>
        <label>TMBIM6</label>
    </interactant>
    <organismsDiffer>false</organismsDiffer>
    <experiments>3</experiments>
</comment>
<comment type="interaction">
    <interactant intactId="EBI-1748945">
        <id>P46695</id>
    </interactant>
    <interactant intactId="EBI-6447886">
        <id>Q9Y320</id>
        <label>TMX2</label>
    </interactant>
    <organismsDiffer>false</organismsDiffer>
    <experiments>3</experiments>
</comment>
<comment type="subcellular location">
    <subcellularLocation>
        <location evidence="3">Membrane</location>
        <topology evidence="3">Single-pass type II membrane protein</topology>
    </subcellularLocation>
</comment>
<comment type="induction">
    <text evidence="6">By radiation, 12-O-tetradecanoyl phorbol-13 acetate (TPA), okadaic acid, TNF and NUPR1.</text>
</comment>
<comment type="PTM">
    <text evidence="3">Phosphorylated at Thr-18, Thr-123 and Ser-126 by MAPK1/ERK2 and probably MAPK3/ERK1. Upon phosphorylation by MAPK1/ERK2 and MAPK3/ERK1, acquires the ability to inhibit cell death induced by various stimuli.</text>
</comment>
<comment type="PTM">
    <text>Glycosylated.</text>
</comment>
<comment type="similarity">
    <text evidence="12">Belongs to the IER3 family.</text>
</comment>
<comment type="online information" name="Atlas of Genetics and Cytogenetics in Oncology and Haematology">
    <link uri="https://atlasgeneticsoncology.org/gene/40919/IER3"/>
</comment>
<reference key="1">
    <citation type="journal article" date="1996" name="Cancer Res.">
        <title>Identification and characterization of a radiation-inducible glycosylated human early-response gene.</title>
        <authorList>
            <person name="Kondratyev A.D."/>
            <person name="Chung K.-N."/>
            <person name="Jung M.O."/>
        </authorList>
    </citation>
    <scope>NUCLEOTIDE SEQUENCE [MRNA]</scope>
    <scope>VARIANT PRO-127</scope>
    <source>
        <tissue>Placenta</tissue>
    </source>
</reference>
<reference key="2">
    <citation type="journal article" date="1996" name="Cancer Res.">
        <title>PRG1: a novel early-response gene transcriptionally induced by pituitary adenylate cyclase activating polypeptide in a pancreatic carcinoma cell line.</title>
        <authorList>
            <person name="Schaefer H."/>
            <person name="Trauzold A."/>
            <person name="Siegel E.G."/>
            <person name="Folsch U.R."/>
            <person name="Schmidt W.E."/>
        </authorList>
    </citation>
    <scope>NUCLEOTIDE SEQUENCE [GENOMIC DNA]</scope>
    <scope>VARIANT PRO-127</scope>
</reference>
<reference key="3">
    <citation type="journal article" date="1997" name="Biochem. Biophys. Res. Commun.">
        <title>Identification and characterization of a novel monocyte/macrophage differentiation-dependent gene that is responsive to lipopolysaccharide, ceramide, and lysophosphatidylcholine.</title>
        <authorList>
            <person name="Pietzsch A."/>
            <person name="Buechler C."/>
            <person name="Aslanidis C."/>
            <person name="Schmitz G."/>
        </authorList>
    </citation>
    <scope>NUCLEOTIDE SEQUENCE [MRNA]</scope>
    <scope>VARIANT PRO-127</scope>
</reference>
<reference key="4">
    <citation type="submission" date="2003-05" db="EMBL/GenBank/DDBJ databases">
        <title>Cloning of human full-length CDSs in BD Creator(TM) system donor vector.</title>
        <authorList>
            <person name="Kalnine N."/>
            <person name="Chen X."/>
            <person name="Rolfs A."/>
            <person name="Halleck A."/>
            <person name="Hines L."/>
            <person name="Eisenstein S."/>
            <person name="Koundinya M."/>
            <person name="Raphael J."/>
            <person name="Moreira D."/>
            <person name="Kelley T."/>
            <person name="LaBaer J."/>
            <person name="Lin Y."/>
            <person name="Phelan M."/>
            <person name="Farmer A."/>
        </authorList>
    </citation>
    <scope>NUCLEOTIDE SEQUENCE [LARGE SCALE MRNA]</scope>
    <scope>VARIANT PRO-127</scope>
</reference>
<reference key="5">
    <citation type="submission" date="1999-09" db="EMBL/GenBank/DDBJ databases">
        <title>Homo sapiens 2,229,817bp genomic DNA of 6p21.3 HLA class I region.</title>
        <authorList>
            <person name="Shiina S."/>
            <person name="Tamiya G."/>
            <person name="Oka A."/>
            <person name="Inoko H."/>
        </authorList>
    </citation>
    <scope>NUCLEOTIDE SEQUENCE [LARGE SCALE GENOMIC DNA]</scope>
    <scope>VARIANT PRO-127</scope>
</reference>
<reference key="6">
    <citation type="journal article" date="2003" name="Nature">
        <title>The DNA sequence and analysis of human chromosome 6.</title>
        <authorList>
            <person name="Mungall A.J."/>
            <person name="Palmer S.A."/>
            <person name="Sims S.K."/>
            <person name="Edwards C.A."/>
            <person name="Ashurst J.L."/>
            <person name="Wilming L."/>
            <person name="Jones M.C."/>
            <person name="Horton R."/>
            <person name="Hunt S.E."/>
            <person name="Scott C.E."/>
            <person name="Gilbert J.G.R."/>
            <person name="Clamp M.E."/>
            <person name="Bethel G."/>
            <person name="Milne S."/>
            <person name="Ainscough R."/>
            <person name="Almeida J.P."/>
            <person name="Ambrose K.D."/>
            <person name="Andrews T.D."/>
            <person name="Ashwell R.I.S."/>
            <person name="Babbage A.K."/>
            <person name="Bagguley C.L."/>
            <person name="Bailey J."/>
            <person name="Banerjee R."/>
            <person name="Barker D.J."/>
            <person name="Barlow K.F."/>
            <person name="Bates K."/>
            <person name="Beare D.M."/>
            <person name="Beasley H."/>
            <person name="Beasley O."/>
            <person name="Bird C.P."/>
            <person name="Blakey S.E."/>
            <person name="Bray-Allen S."/>
            <person name="Brook J."/>
            <person name="Brown A.J."/>
            <person name="Brown J.Y."/>
            <person name="Burford D.C."/>
            <person name="Burrill W."/>
            <person name="Burton J."/>
            <person name="Carder C."/>
            <person name="Carter N.P."/>
            <person name="Chapman J.C."/>
            <person name="Clark S.Y."/>
            <person name="Clark G."/>
            <person name="Clee C.M."/>
            <person name="Clegg S."/>
            <person name="Cobley V."/>
            <person name="Collier R.E."/>
            <person name="Collins J.E."/>
            <person name="Colman L.K."/>
            <person name="Corby N.R."/>
            <person name="Coville G.J."/>
            <person name="Culley K.M."/>
            <person name="Dhami P."/>
            <person name="Davies J."/>
            <person name="Dunn M."/>
            <person name="Earthrowl M.E."/>
            <person name="Ellington A.E."/>
            <person name="Evans K.A."/>
            <person name="Faulkner L."/>
            <person name="Francis M.D."/>
            <person name="Frankish A."/>
            <person name="Frankland J."/>
            <person name="French L."/>
            <person name="Garner P."/>
            <person name="Garnett J."/>
            <person name="Ghori M.J."/>
            <person name="Gilby L.M."/>
            <person name="Gillson C.J."/>
            <person name="Glithero R.J."/>
            <person name="Grafham D.V."/>
            <person name="Grant M."/>
            <person name="Gribble S."/>
            <person name="Griffiths C."/>
            <person name="Griffiths M.N.D."/>
            <person name="Hall R."/>
            <person name="Halls K.S."/>
            <person name="Hammond S."/>
            <person name="Harley J.L."/>
            <person name="Hart E.A."/>
            <person name="Heath P.D."/>
            <person name="Heathcott R."/>
            <person name="Holmes S.J."/>
            <person name="Howden P.J."/>
            <person name="Howe K.L."/>
            <person name="Howell G.R."/>
            <person name="Huckle E."/>
            <person name="Humphray S.J."/>
            <person name="Humphries M.D."/>
            <person name="Hunt A.R."/>
            <person name="Johnson C.M."/>
            <person name="Joy A.A."/>
            <person name="Kay M."/>
            <person name="Keenan S.J."/>
            <person name="Kimberley A.M."/>
            <person name="King A."/>
            <person name="Laird G.K."/>
            <person name="Langford C."/>
            <person name="Lawlor S."/>
            <person name="Leongamornlert D.A."/>
            <person name="Leversha M."/>
            <person name="Lloyd C.R."/>
            <person name="Lloyd D.M."/>
            <person name="Loveland J.E."/>
            <person name="Lovell J."/>
            <person name="Martin S."/>
            <person name="Mashreghi-Mohammadi M."/>
            <person name="Maslen G.L."/>
            <person name="Matthews L."/>
            <person name="McCann O.T."/>
            <person name="McLaren S.J."/>
            <person name="McLay K."/>
            <person name="McMurray A."/>
            <person name="Moore M.J.F."/>
            <person name="Mullikin J.C."/>
            <person name="Niblett D."/>
            <person name="Nickerson T."/>
            <person name="Novik K.L."/>
            <person name="Oliver K."/>
            <person name="Overton-Larty E.K."/>
            <person name="Parker A."/>
            <person name="Patel R."/>
            <person name="Pearce A.V."/>
            <person name="Peck A.I."/>
            <person name="Phillimore B.J.C.T."/>
            <person name="Phillips S."/>
            <person name="Plumb R.W."/>
            <person name="Porter K.M."/>
            <person name="Ramsey Y."/>
            <person name="Ranby S.A."/>
            <person name="Rice C.M."/>
            <person name="Ross M.T."/>
            <person name="Searle S.M."/>
            <person name="Sehra H.K."/>
            <person name="Sheridan E."/>
            <person name="Skuce C.D."/>
            <person name="Smith S."/>
            <person name="Smith M."/>
            <person name="Spraggon L."/>
            <person name="Squares S.L."/>
            <person name="Steward C.A."/>
            <person name="Sycamore N."/>
            <person name="Tamlyn-Hall G."/>
            <person name="Tester J."/>
            <person name="Theaker A.J."/>
            <person name="Thomas D.W."/>
            <person name="Thorpe A."/>
            <person name="Tracey A."/>
            <person name="Tromans A."/>
            <person name="Tubby B."/>
            <person name="Wall M."/>
            <person name="Wallis J.M."/>
            <person name="West A.P."/>
            <person name="White S.S."/>
            <person name="Whitehead S.L."/>
            <person name="Whittaker H."/>
            <person name="Wild A."/>
            <person name="Willey D.J."/>
            <person name="Wilmer T.E."/>
            <person name="Wood J.M."/>
            <person name="Wray P.W."/>
            <person name="Wyatt J.C."/>
            <person name="Young L."/>
            <person name="Younger R.M."/>
            <person name="Bentley D.R."/>
            <person name="Coulson A."/>
            <person name="Durbin R.M."/>
            <person name="Hubbard T."/>
            <person name="Sulston J.E."/>
            <person name="Dunham I."/>
            <person name="Rogers J."/>
            <person name="Beck S."/>
        </authorList>
    </citation>
    <scope>NUCLEOTIDE SEQUENCE [LARGE SCALE GENOMIC DNA]</scope>
</reference>
<reference key="7">
    <citation type="journal article" date="2004" name="Genome Res.">
        <title>The status, quality, and expansion of the NIH full-length cDNA project: the Mammalian Gene Collection (MGC).</title>
        <authorList>
            <consortium name="The MGC Project Team"/>
        </authorList>
    </citation>
    <scope>NUCLEOTIDE SEQUENCE [LARGE SCALE MRNA]</scope>
    <scope>VARIANT PRO-127</scope>
    <source>
        <tissue>Cervix</tissue>
        <tissue>Skin</tissue>
    </source>
</reference>
<reference key="8">
    <citation type="journal article" date="2002" name="EMBO J.">
        <title>IEX-1: a new ERK substrate involved in both ERK survival activity and ERK activation.</title>
        <authorList>
            <person name="Garcia J."/>
            <person name="Ye Y."/>
            <person name="Arranz V."/>
            <person name="Letourneux C."/>
            <person name="Pezeron G."/>
            <person name="Porteu F."/>
        </authorList>
    </citation>
    <scope>PHOSPHORYLATION AT THR-18; THR-123 AND SER-126</scope>
    <scope>INTERACTION WITH MAPK1/ERK2</scope>
    <scope>SUBCELLULAR LOCATION</scope>
    <scope>FUNCTION</scope>
</reference>
<reference key="9">
    <citation type="journal article" date="2006" name="EMBO J.">
        <title>B56-containing PP2A dephosphorylate ERK and their activity is controlled by the early gene IEX-1 and ERK.</title>
        <authorList>
            <person name="Letourneux C."/>
            <person name="Rocher G."/>
            <person name="Porteu F."/>
        </authorList>
    </citation>
    <scope>FUNCTION</scope>
    <scope>INTERACTION WITH PPP2R5C AND PPP2CA</scope>
</reference>
<reference key="10">
    <citation type="journal article" date="2008" name="Proc. Natl. Acad. Sci. U.S.A.">
        <title>A quantitative atlas of mitotic phosphorylation.</title>
        <authorList>
            <person name="Dephoure N."/>
            <person name="Zhou C."/>
            <person name="Villen J."/>
            <person name="Beausoleil S.A."/>
            <person name="Bakalarski C.E."/>
            <person name="Elledge S.J."/>
            <person name="Gygi S.P."/>
        </authorList>
    </citation>
    <scope>PHOSPHORYLATION [LARGE SCALE ANALYSIS] AT SER-31</scope>
    <scope>IDENTIFICATION BY MASS SPECTROMETRY [LARGE SCALE ANALYSIS]</scope>
    <source>
        <tissue>Cervix carcinoma</tissue>
    </source>
</reference>
<reference key="11">
    <citation type="journal article" date="2012" name="J. Clin. Invest.">
        <title>Nuclear protein 1 promotes pancreatic cancer development and protects cells from stress by inhibiting apoptosis.</title>
        <authorList>
            <person name="Hamidi T."/>
            <person name="Algul H."/>
            <person name="Cano C.E."/>
            <person name="Sandi M.J."/>
            <person name="Molejon M.I."/>
            <person name="Riemann M."/>
            <person name="Calvo E.L."/>
            <person name="Lomberk G."/>
            <person name="Dagorn J.C."/>
            <person name="Weih F."/>
            <person name="Urrutia R."/>
            <person name="Schmid R.M."/>
            <person name="Iovanna J.L."/>
        </authorList>
    </citation>
    <scope>FUNCTION</scope>
    <scope>INDUCTION BY NUPR1</scope>
</reference>
<feature type="chain" id="PRO_0000084159" description="Radiation-inducible immediate-early gene IEX-1">
    <location>
        <begin position="1"/>
        <end position="156"/>
    </location>
</feature>
<feature type="topological domain" description="Cytoplasmic" evidence="1">
    <location>
        <begin position="1"/>
        <end position="82"/>
    </location>
</feature>
<feature type="transmembrane region" description="Helical; Signal-anchor for type II membrane protein" evidence="1">
    <location>
        <begin position="83"/>
        <end position="99"/>
    </location>
</feature>
<feature type="topological domain" description="Extracellular" evidence="1">
    <location>
        <begin position="100"/>
        <end position="156"/>
    </location>
</feature>
<feature type="region of interest" description="Disordered" evidence="2">
    <location>
        <begin position="1"/>
        <end position="62"/>
    </location>
</feature>
<feature type="compositionally biased region" description="Low complexity" evidence="2">
    <location>
        <begin position="44"/>
        <end position="55"/>
    </location>
</feature>
<feature type="modified residue" description="Phosphothreonine; by MAPK1" evidence="3">
    <location>
        <position position="18"/>
    </location>
</feature>
<feature type="modified residue" description="Phosphoserine" evidence="13">
    <location>
        <position position="31"/>
    </location>
</feature>
<feature type="modified residue" description="Phosphothreonine; by MAPK1" evidence="3">
    <location>
        <position position="123"/>
    </location>
</feature>
<feature type="modified residue" description="Phosphoserine; by MAPK1" evidence="3">
    <location>
        <position position="126"/>
    </location>
</feature>
<feature type="glycosylation site" description="N-linked (GlcNAc...) asparagine" evidence="1">
    <location>
        <position position="133"/>
    </location>
</feature>
<feature type="sequence variant" id="VAR_058496" description="In dbSNP:rs3094124." evidence="4 7 8 9 10 11">
    <original>A</original>
    <variation>P</variation>
    <location>
        <position position="127"/>
    </location>
</feature>
<feature type="sequence conflict" description="In Ref. 1; AAB36278." evidence="12" ref="1">
    <original>A</original>
    <variation>G</variation>
    <location>
        <position position="54"/>
    </location>
</feature>
<feature type="sequence conflict" description="In Ref. 1; AAB36278." evidence="12" ref="1">
    <original>P</original>
    <variation>R</variation>
    <location>
        <position position="106"/>
    </location>
</feature>
<keyword id="KW-0325">Glycoprotein</keyword>
<keyword id="KW-0472">Membrane</keyword>
<keyword id="KW-0597">Phosphoprotein</keyword>
<keyword id="KW-1267">Proteomics identification</keyword>
<keyword id="KW-1185">Reference proteome</keyword>
<keyword id="KW-0735">Signal-anchor</keyword>
<keyword id="KW-0812">Transmembrane</keyword>
<keyword id="KW-1133">Transmembrane helix</keyword>
<organism>
    <name type="scientific">Homo sapiens</name>
    <name type="common">Human</name>
    <dbReference type="NCBI Taxonomy" id="9606"/>
    <lineage>
        <taxon>Eukaryota</taxon>
        <taxon>Metazoa</taxon>
        <taxon>Chordata</taxon>
        <taxon>Craniata</taxon>
        <taxon>Vertebrata</taxon>
        <taxon>Euteleostomi</taxon>
        <taxon>Mammalia</taxon>
        <taxon>Eutheria</taxon>
        <taxon>Euarchontoglires</taxon>
        <taxon>Primates</taxon>
        <taxon>Haplorrhini</taxon>
        <taxon>Catarrhini</taxon>
        <taxon>Hominidae</taxon>
        <taxon>Homo</taxon>
    </lineage>
</organism>
<name>IEX1_HUMAN</name>
<protein>
    <recommendedName>
        <fullName>Radiation-inducible immediate-early gene IEX-1</fullName>
    </recommendedName>
    <alternativeName>
        <fullName>Differentiation-dependent gene 2 protein</fullName>
        <shortName>Protein DIF-2</shortName>
    </alternativeName>
    <alternativeName>
        <fullName>Immediate early protein GLY96</fullName>
    </alternativeName>
    <alternativeName>
        <fullName>Immediate early response 3 protein</fullName>
    </alternativeName>
    <alternativeName>
        <fullName>PACAP-responsive gene 1 protein</fullName>
        <shortName>Protein PRG1</shortName>
    </alternativeName>
</protein>
<accession>P46695</accession>
<accession>Q5SU30</accession>
<accession>Q92691</accession>
<accession>Q93044</accession>